<organism>
    <name type="scientific">Gluconobacter oxydans (strain 621H)</name>
    <name type="common">Gluconobacter suboxydans</name>
    <dbReference type="NCBI Taxonomy" id="290633"/>
    <lineage>
        <taxon>Bacteria</taxon>
        <taxon>Pseudomonadati</taxon>
        <taxon>Pseudomonadota</taxon>
        <taxon>Alphaproteobacteria</taxon>
        <taxon>Acetobacterales</taxon>
        <taxon>Acetobacteraceae</taxon>
        <taxon>Gluconobacter</taxon>
    </lineage>
</organism>
<proteinExistence type="inferred from homology"/>
<gene>
    <name evidence="1" type="primary">rppH</name>
    <name evidence="1" type="synonym">nudH</name>
    <name type="ordered locus">GOX0334</name>
</gene>
<reference key="1">
    <citation type="journal article" date="2005" name="Nat. Biotechnol.">
        <title>Complete genome sequence of the acetic acid bacterium Gluconobacter oxydans.</title>
        <authorList>
            <person name="Prust C."/>
            <person name="Hoffmeister M."/>
            <person name="Liesegang H."/>
            <person name="Wiezer A."/>
            <person name="Fricke W.F."/>
            <person name="Ehrenreich A."/>
            <person name="Gottschalk G."/>
            <person name="Deppenmeier U."/>
        </authorList>
    </citation>
    <scope>NUCLEOTIDE SEQUENCE [LARGE SCALE GENOMIC DNA]</scope>
    <source>
        <strain>621H</strain>
    </source>
</reference>
<keyword id="KW-0378">Hydrolase</keyword>
<keyword id="KW-1185">Reference proteome</keyword>
<feature type="chain" id="PRO_0000231909" description="RNA pyrophosphohydrolase">
    <location>
        <begin position="1"/>
        <end position="170"/>
    </location>
</feature>
<feature type="domain" description="Nudix hydrolase" evidence="1">
    <location>
        <begin position="8"/>
        <end position="151"/>
    </location>
</feature>
<feature type="short sequence motif" description="Nudix box">
    <location>
        <begin position="42"/>
        <end position="63"/>
    </location>
</feature>
<name>RPPH_GLUOX</name>
<protein>
    <recommendedName>
        <fullName evidence="1">RNA pyrophosphohydrolase</fullName>
        <ecNumber evidence="1">3.6.1.-</ecNumber>
    </recommendedName>
    <alternativeName>
        <fullName evidence="1">(Di)nucleoside polyphosphate hydrolase</fullName>
    </alternativeName>
</protein>
<dbReference type="EC" id="3.6.1.-" evidence="1"/>
<dbReference type="EMBL" id="CP000009">
    <property type="protein sequence ID" value="AAW60117.1"/>
    <property type="molecule type" value="Genomic_DNA"/>
</dbReference>
<dbReference type="RefSeq" id="WP_011251920.1">
    <property type="nucleotide sequence ID" value="NC_006677.1"/>
</dbReference>
<dbReference type="SMR" id="Q5FU29"/>
<dbReference type="STRING" id="290633.GOX0334"/>
<dbReference type="KEGG" id="gox:GOX0334"/>
<dbReference type="eggNOG" id="COG0494">
    <property type="taxonomic scope" value="Bacteria"/>
</dbReference>
<dbReference type="HOGENOM" id="CLU_087195_3_0_5"/>
<dbReference type="Proteomes" id="UP000006375">
    <property type="component" value="Chromosome"/>
</dbReference>
<dbReference type="GO" id="GO:0034432">
    <property type="term" value="F:bis(5'-adenosyl)-pentaphosphatase activity"/>
    <property type="evidence" value="ECO:0007669"/>
    <property type="project" value="TreeGrafter"/>
</dbReference>
<dbReference type="GO" id="GO:0008893">
    <property type="term" value="F:guanosine-3',5'-bis(diphosphate) 3'-diphosphatase activity"/>
    <property type="evidence" value="ECO:0007669"/>
    <property type="project" value="TreeGrafter"/>
</dbReference>
<dbReference type="GO" id="GO:0006753">
    <property type="term" value="P:nucleoside phosphate metabolic process"/>
    <property type="evidence" value="ECO:0007669"/>
    <property type="project" value="TreeGrafter"/>
</dbReference>
<dbReference type="GO" id="GO:0019693">
    <property type="term" value="P:ribose phosphate metabolic process"/>
    <property type="evidence" value="ECO:0007669"/>
    <property type="project" value="TreeGrafter"/>
</dbReference>
<dbReference type="CDD" id="cd03671">
    <property type="entry name" value="NUDIX_Ap4A_hydrolase_plant_like"/>
    <property type="match status" value="1"/>
</dbReference>
<dbReference type="Gene3D" id="3.90.79.10">
    <property type="entry name" value="Nucleoside Triphosphate Pyrophosphohydrolase"/>
    <property type="match status" value="1"/>
</dbReference>
<dbReference type="HAMAP" id="MF_00298">
    <property type="entry name" value="Nudix_RppH"/>
    <property type="match status" value="1"/>
</dbReference>
<dbReference type="InterPro" id="IPR020476">
    <property type="entry name" value="Nudix_hydrolase"/>
</dbReference>
<dbReference type="InterPro" id="IPR015797">
    <property type="entry name" value="NUDIX_hydrolase-like_dom_sf"/>
</dbReference>
<dbReference type="InterPro" id="IPR020084">
    <property type="entry name" value="NUDIX_hydrolase_CS"/>
</dbReference>
<dbReference type="InterPro" id="IPR000086">
    <property type="entry name" value="NUDIX_hydrolase_dom"/>
</dbReference>
<dbReference type="InterPro" id="IPR022927">
    <property type="entry name" value="RppH"/>
</dbReference>
<dbReference type="NCBIfam" id="NF001938">
    <property type="entry name" value="PRK00714.1-5"/>
    <property type="match status" value="1"/>
</dbReference>
<dbReference type="PANTHER" id="PTHR11839:SF30">
    <property type="entry name" value="NUDIX HYDROLASE 25"/>
    <property type="match status" value="1"/>
</dbReference>
<dbReference type="PANTHER" id="PTHR11839">
    <property type="entry name" value="UDP/ADP-SUGAR PYROPHOSPHATASE"/>
    <property type="match status" value="1"/>
</dbReference>
<dbReference type="Pfam" id="PF00293">
    <property type="entry name" value="NUDIX"/>
    <property type="match status" value="1"/>
</dbReference>
<dbReference type="PRINTS" id="PR00502">
    <property type="entry name" value="NUDIXFAMILY"/>
</dbReference>
<dbReference type="SUPFAM" id="SSF55811">
    <property type="entry name" value="Nudix"/>
    <property type="match status" value="1"/>
</dbReference>
<dbReference type="PROSITE" id="PS51462">
    <property type="entry name" value="NUDIX"/>
    <property type="match status" value="1"/>
</dbReference>
<dbReference type="PROSITE" id="PS00893">
    <property type="entry name" value="NUDIX_BOX"/>
    <property type="match status" value="1"/>
</dbReference>
<comment type="function">
    <text evidence="1">Accelerates the degradation of transcripts by removing pyrophosphate from the 5'-end of triphosphorylated RNA, leading to a more labile monophosphorylated state that can stimulate subsequent ribonuclease cleavage.</text>
</comment>
<comment type="cofactor">
    <cofactor evidence="1">
        <name>a divalent metal cation</name>
        <dbReference type="ChEBI" id="CHEBI:60240"/>
    </cofactor>
</comment>
<comment type="similarity">
    <text evidence="1">Belongs to the Nudix hydrolase family. RppH subfamily.</text>
</comment>
<evidence type="ECO:0000255" key="1">
    <source>
        <dbReference type="HAMAP-Rule" id="MF_00298"/>
    </source>
</evidence>
<sequence length="170" mass="19126">MTDPMTLPYRPNVGIALFNRDGKLFIARRTDLPGDVWQCPQGGIDEGETPQVAALREMGEEIGTQNARILAERSGWLSYDLPSDLIGKALGGRFRGQTQKWFVMGYEGQDSDIRLDLQDPPEFDAWEWVDPQAVLNRNLGFKKALYAELIPELAALFQAAARDWVRTSRA</sequence>
<accession>Q5FU29</accession>